<feature type="chain" id="PRO_0000053300" description="Myoglobin">
    <location>
        <begin position="1"/>
        <end position="154"/>
    </location>
</feature>
<feature type="domain" description="Globin" evidence="7">
    <location>
        <begin position="2"/>
        <end position="148"/>
    </location>
</feature>
<feature type="binding site" evidence="5">
    <location>
        <position position="65"/>
    </location>
    <ligand>
        <name>nitrite</name>
        <dbReference type="ChEBI" id="CHEBI:16301"/>
    </ligand>
</feature>
<feature type="binding site" evidence="3 7">
    <location>
        <position position="65"/>
    </location>
    <ligand>
        <name>O2</name>
        <dbReference type="ChEBI" id="CHEBI:15379"/>
    </ligand>
</feature>
<feature type="binding site" description="proximal binding residue" evidence="1">
    <location>
        <position position="94"/>
    </location>
    <ligand>
        <name>heme b</name>
        <dbReference type="ChEBI" id="CHEBI:60344"/>
    </ligand>
    <ligandPart>
        <name>Fe</name>
        <dbReference type="ChEBI" id="CHEBI:18248"/>
    </ligandPart>
</feature>
<feature type="modified residue" description="Phosphoserine" evidence="6">
    <location>
        <position position="4"/>
    </location>
</feature>
<feature type="modified residue" description="Phosphothreonine" evidence="4">
    <location>
        <position position="68"/>
    </location>
</feature>
<organism>
    <name type="scientific">Halichoerus grypus</name>
    <name type="common">Gray seal</name>
    <name type="synonym">Phoca grypus</name>
    <dbReference type="NCBI Taxonomy" id="9711"/>
    <lineage>
        <taxon>Eukaryota</taxon>
        <taxon>Metazoa</taxon>
        <taxon>Chordata</taxon>
        <taxon>Craniata</taxon>
        <taxon>Vertebrata</taxon>
        <taxon>Euteleostomi</taxon>
        <taxon>Mammalia</taxon>
        <taxon>Eutheria</taxon>
        <taxon>Laurasiatheria</taxon>
        <taxon>Carnivora</taxon>
        <taxon>Caniformia</taxon>
        <taxon>Pinnipedia</taxon>
        <taxon>Phocidae</taxon>
        <taxon>Phocinae</taxon>
        <taxon>Halichoerus</taxon>
    </lineage>
</organism>
<evidence type="ECO:0000250" key="1">
    <source>
        <dbReference type="UniProtKB" id="P02144"/>
    </source>
</evidence>
<evidence type="ECO:0000250" key="2">
    <source>
        <dbReference type="UniProtKB" id="P02185"/>
    </source>
</evidence>
<evidence type="ECO:0000250" key="3">
    <source>
        <dbReference type="UniProtKB" id="P02189"/>
    </source>
</evidence>
<evidence type="ECO:0000250" key="4">
    <source>
        <dbReference type="UniProtKB" id="P04247"/>
    </source>
</evidence>
<evidence type="ECO:0000250" key="5">
    <source>
        <dbReference type="UniProtKB" id="P68082"/>
    </source>
</evidence>
<evidence type="ECO:0000250" key="6">
    <source>
        <dbReference type="UniProtKB" id="Q9QZ76"/>
    </source>
</evidence>
<evidence type="ECO:0000255" key="7">
    <source>
        <dbReference type="PROSITE-ProRule" id="PRU00238"/>
    </source>
</evidence>
<dbReference type="EC" id="1.7.-.-" evidence="1"/>
<dbReference type="EC" id="1.11.1.-" evidence="1"/>
<dbReference type="EMBL" id="V00471">
    <property type="protein sequence ID" value="CAA23743.1"/>
    <property type="molecule type" value="Genomic_DNA"/>
</dbReference>
<dbReference type="EMBL" id="V00472">
    <property type="protein sequence ID" value="CAA23743.1"/>
    <property type="status" value="JOINED"/>
    <property type="molecule type" value="Genomic_DNA"/>
</dbReference>
<dbReference type="EMBL" id="V00473">
    <property type="protein sequence ID" value="CAA23743.1"/>
    <property type="status" value="JOINED"/>
    <property type="molecule type" value="Genomic_DNA"/>
</dbReference>
<dbReference type="PIR" id="A93295">
    <property type="entry name" value="MYSLG"/>
</dbReference>
<dbReference type="RefSeq" id="XP_035956092.1">
    <property type="nucleotide sequence ID" value="XM_036100199.1"/>
</dbReference>
<dbReference type="PDB" id="1MBS">
    <property type="method" value="X-ray"/>
    <property type="resolution" value="2.50 A"/>
    <property type="chains" value="A=2-154"/>
</dbReference>
<dbReference type="PDBsum" id="1MBS"/>
<dbReference type="SMR" id="P68081"/>
<dbReference type="GeneID" id="118540851"/>
<dbReference type="GO" id="GO:0070062">
    <property type="term" value="C:extracellular exosome"/>
    <property type="evidence" value="ECO:0007669"/>
    <property type="project" value="TreeGrafter"/>
</dbReference>
<dbReference type="GO" id="GO:0016528">
    <property type="term" value="C:sarcoplasm"/>
    <property type="evidence" value="ECO:0000250"/>
    <property type="project" value="UniProtKB"/>
</dbReference>
<dbReference type="GO" id="GO:0020037">
    <property type="term" value="F:heme binding"/>
    <property type="evidence" value="ECO:0007669"/>
    <property type="project" value="InterPro"/>
</dbReference>
<dbReference type="GO" id="GO:0046872">
    <property type="term" value="F:metal ion binding"/>
    <property type="evidence" value="ECO:0007669"/>
    <property type="project" value="UniProtKB-KW"/>
</dbReference>
<dbReference type="GO" id="GO:0098809">
    <property type="term" value="F:nitrite reductase activity"/>
    <property type="evidence" value="ECO:0000250"/>
    <property type="project" value="UniProtKB"/>
</dbReference>
<dbReference type="GO" id="GO:0019825">
    <property type="term" value="F:oxygen binding"/>
    <property type="evidence" value="ECO:0007669"/>
    <property type="project" value="InterPro"/>
</dbReference>
<dbReference type="GO" id="GO:0005344">
    <property type="term" value="F:oxygen carrier activity"/>
    <property type="evidence" value="ECO:0000250"/>
    <property type="project" value="UniProtKB"/>
</dbReference>
<dbReference type="GO" id="GO:0004601">
    <property type="term" value="F:peroxidase activity"/>
    <property type="evidence" value="ECO:0000250"/>
    <property type="project" value="UniProtKB"/>
</dbReference>
<dbReference type="GO" id="GO:0019430">
    <property type="term" value="P:removal of superoxide radicals"/>
    <property type="evidence" value="ECO:0000250"/>
    <property type="project" value="UniProtKB"/>
</dbReference>
<dbReference type="CDD" id="cd08926">
    <property type="entry name" value="Mb"/>
    <property type="match status" value="1"/>
</dbReference>
<dbReference type="Gene3D" id="6.10.140.2100">
    <property type="match status" value="1"/>
</dbReference>
<dbReference type="Gene3D" id="6.10.140.2110">
    <property type="match status" value="1"/>
</dbReference>
<dbReference type="InterPro" id="IPR000971">
    <property type="entry name" value="Globin"/>
</dbReference>
<dbReference type="InterPro" id="IPR009050">
    <property type="entry name" value="Globin-like_sf"/>
</dbReference>
<dbReference type="InterPro" id="IPR002335">
    <property type="entry name" value="Myoglobin"/>
</dbReference>
<dbReference type="PANTHER" id="PTHR47132">
    <property type="entry name" value="MYOGLOBIN"/>
    <property type="match status" value="1"/>
</dbReference>
<dbReference type="PANTHER" id="PTHR47132:SF1">
    <property type="entry name" value="MYOGLOBIN"/>
    <property type="match status" value="1"/>
</dbReference>
<dbReference type="Pfam" id="PF00042">
    <property type="entry name" value="Globin"/>
    <property type="match status" value="1"/>
</dbReference>
<dbReference type="PRINTS" id="PR00613">
    <property type="entry name" value="MYOGLOBIN"/>
</dbReference>
<dbReference type="SUPFAM" id="SSF46458">
    <property type="entry name" value="Globin-like"/>
    <property type="match status" value="1"/>
</dbReference>
<dbReference type="PROSITE" id="PS01033">
    <property type="entry name" value="GLOBIN"/>
    <property type="match status" value="1"/>
</dbReference>
<gene>
    <name type="primary">MB</name>
</gene>
<reference key="1">
    <citation type="journal article" date="1983" name="Nature">
        <title>The seal myoglobin gene: an unusually long globin gene.</title>
        <authorList>
            <person name="Blanchetot A."/>
            <person name="Wilson V."/>
            <person name="Wood D."/>
            <person name="Jeffreys A.J."/>
        </authorList>
    </citation>
    <scope>NUCLEOTIDE SEQUENCE [GENOMIC DNA]</scope>
</reference>
<accession>P68081</accession>
<accession>P02162</accession>
<protein>
    <recommendedName>
        <fullName>Myoglobin</fullName>
    </recommendedName>
    <alternativeName>
        <fullName evidence="1">Nitrite reductase MB</fullName>
        <ecNumber evidence="1">1.7.-.-</ecNumber>
    </alternativeName>
    <alternativeName>
        <fullName evidence="1">Pseudoperoxidase MB</fullName>
        <ecNumber evidence="1">1.11.1.-</ecNumber>
    </alternativeName>
</protein>
<keyword id="KW-0002">3D-structure</keyword>
<keyword id="KW-0963">Cytoplasm</keyword>
<keyword id="KW-0349">Heme</keyword>
<keyword id="KW-0408">Iron</keyword>
<keyword id="KW-0479">Metal-binding</keyword>
<keyword id="KW-0514">Muscle protein</keyword>
<keyword id="KW-0560">Oxidoreductase</keyword>
<keyword id="KW-0561">Oxygen transport</keyword>
<keyword id="KW-0597">Phosphoprotein</keyword>
<keyword id="KW-0813">Transport</keyword>
<sequence length="154" mass="17428">MGLSDGEWHLVLNVWGKVETDLAGHGQEVLIRLFKSHPETLEKFDKFKHLKSEDDMRRSEDLRKHGNTVLTALGGILKKKGHHEAELKPLAQSHATKHKIPIKYLEFISEAIIHVLHSKHPAEFGADAQAAMKKALELFRNDIAAKYKELGFHG</sequence>
<proteinExistence type="evidence at protein level"/>
<name>MYG_HALGR</name>
<comment type="function">
    <text evidence="1">Monomeric heme protein which primary function is to store oxygen and facilitate its diffusion within muscle tissues. Reversibly binds oxygen through a pentacoordinated heme iron and enables its timely and efficient release as needed during periods of heightened demand. Depending on the oxidative conditions of tissues and cells, and in addition to its ability to bind oxygen, it also has a nitrite reductase activity whereby it regulates the production of bioactive nitric oxide. Under stress conditions, like hypoxia and anoxia, it also protects cells against reactive oxygen species thanks to its pseudoperoxidase activity.</text>
</comment>
<comment type="catalytic activity">
    <reaction evidence="1">
        <text>Fe(III)-heme b-[protein] + nitric oxide + H2O = Fe(II)-heme b-[protein] + nitrite + 2 H(+)</text>
        <dbReference type="Rhea" id="RHEA:77711"/>
        <dbReference type="Rhea" id="RHEA-COMP:18975"/>
        <dbReference type="Rhea" id="RHEA-COMP:18976"/>
        <dbReference type="ChEBI" id="CHEBI:15377"/>
        <dbReference type="ChEBI" id="CHEBI:15378"/>
        <dbReference type="ChEBI" id="CHEBI:16301"/>
        <dbReference type="ChEBI" id="CHEBI:16480"/>
        <dbReference type="ChEBI" id="CHEBI:55376"/>
        <dbReference type="ChEBI" id="CHEBI:60344"/>
    </reaction>
    <physiologicalReaction direction="right-to-left" evidence="1">
        <dbReference type="Rhea" id="RHEA:77713"/>
    </physiologicalReaction>
</comment>
<comment type="catalytic activity">
    <reaction evidence="1">
        <text>H2O2 + AH2 = A + 2 H2O</text>
        <dbReference type="Rhea" id="RHEA:30275"/>
        <dbReference type="ChEBI" id="CHEBI:13193"/>
        <dbReference type="ChEBI" id="CHEBI:15377"/>
        <dbReference type="ChEBI" id="CHEBI:16240"/>
        <dbReference type="ChEBI" id="CHEBI:17499"/>
    </reaction>
</comment>
<comment type="subunit">
    <text evidence="2">Monomeric.</text>
</comment>
<comment type="subcellular location">
    <subcellularLocation>
        <location evidence="1">Cytoplasm</location>
        <location evidence="1">Sarcoplasm</location>
    </subcellularLocation>
</comment>
<comment type="similarity">
    <text evidence="7">Belongs to the globin family.</text>
</comment>